<name>NU1C_LACSA</name>
<sequence>MIIDTTEVQAINSFSILESLKEVYGIIWMLIPIFTLVLGITIGVLVIVWLEREISAGIQQRIGPEYAGPLGILQALADGTKLLFKENLLPSRGDTRLFSIGPSIAVISILLSYLVIPFSYHLVLADLSIGVFLWIAISSIAPVGLLMSGYGSNNKYSFLGGLRAAAQSISYEIPLTLCVLSISLLSNSSSTVDIVEAQSKYGFWGWNLWRQPIGFLVFLISSLAECERLPFDLPEAEEELVAGYQTEYSGIKFGLFYVASYLNLLVSSLFVTVLYLGGWNLSIPYIFVPEVFEITKRGRVFGTIIGIFITLAKTYLFLFIPIATRWTLPRLRMDQLLNLGWKFLLPISLGNLLLTTCSQLISL</sequence>
<dbReference type="EC" id="7.1.1.-" evidence="1"/>
<dbReference type="EMBL" id="AP007232">
    <property type="protein sequence ID" value="BAE47650.1"/>
    <property type="molecule type" value="Genomic_DNA"/>
</dbReference>
<dbReference type="EMBL" id="DQ383816">
    <property type="protein sequence ID" value="ABD47283.1"/>
    <property type="molecule type" value="Genomic_DNA"/>
</dbReference>
<dbReference type="RefSeq" id="YP_398383.1">
    <property type="nucleotide sequence ID" value="NC_007578.1"/>
</dbReference>
<dbReference type="SMR" id="Q332S2"/>
<dbReference type="GeneID" id="3772850"/>
<dbReference type="KEGG" id="lsv:3772850"/>
<dbReference type="OrthoDB" id="531329at2759"/>
<dbReference type="GO" id="GO:0009535">
    <property type="term" value="C:chloroplast thylakoid membrane"/>
    <property type="evidence" value="ECO:0007669"/>
    <property type="project" value="UniProtKB-SubCell"/>
</dbReference>
<dbReference type="GO" id="GO:0016655">
    <property type="term" value="F:oxidoreductase activity, acting on NAD(P)H, quinone or similar compound as acceptor"/>
    <property type="evidence" value="ECO:0007669"/>
    <property type="project" value="UniProtKB-UniRule"/>
</dbReference>
<dbReference type="GO" id="GO:0048038">
    <property type="term" value="F:quinone binding"/>
    <property type="evidence" value="ECO:0007669"/>
    <property type="project" value="UniProtKB-KW"/>
</dbReference>
<dbReference type="GO" id="GO:0019684">
    <property type="term" value="P:photosynthesis, light reaction"/>
    <property type="evidence" value="ECO:0007669"/>
    <property type="project" value="UniProtKB-UniRule"/>
</dbReference>
<dbReference type="HAMAP" id="MF_01350">
    <property type="entry name" value="NDH1_NuoH"/>
    <property type="match status" value="1"/>
</dbReference>
<dbReference type="InterPro" id="IPR001694">
    <property type="entry name" value="NADH_UbQ_OxRdtase_su1/FPO"/>
</dbReference>
<dbReference type="InterPro" id="IPR018086">
    <property type="entry name" value="NADH_UbQ_OxRdtase_su1_CS"/>
</dbReference>
<dbReference type="NCBIfam" id="NF004741">
    <property type="entry name" value="PRK06076.1-2"/>
    <property type="match status" value="1"/>
</dbReference>
<dbReference type="PANTHER" id="PTHR11432">
    <property type="entry name" value="NADH DEHYDROGENASE SUBUNIT 1"/>
    <property type="match status" value="1"/>
</dbReference>
<dbReference type="PANTHER" id="PTHR11432:SF3">
    <property type="entry name" value="NADH-UBIQUINONE OXIDOREDUCTASE CHAIN 1"/>
    <property type="match status" value="1"/>
</dbReference>
<dbReference type="Pfam" id="PF00146">
    <property type="entry name" value="NADHdh"/>
    <property type="match status" value="1"/>
</dbReference>
<dbReference type="PROSITE" id="PS00667">
    <property type="entry name" value="COMPLEX1_ND1_1"/>
    <property type="match status" value="1"/>
</dbReference>
<dbReference type="PROSITE" id="PS00668">
    <property type="entry name" value="COMPLEX1_ND1_2"/>
    <property type="match status" value="1"/>
</dbReference>
<gene>
    <name evidence="1" type="primary">ndhA</name>
</gene>
<accession>Q332S2</accession>
<evidence type="ECO:0000255" key="1">
    <source>
        <dbReference type="HAMAP-Rule" id="MF_01350"/>
    </source>
</evidence>
<protein>
    <recommendedName>
        <fullName evidence="1">NAD(P)H-quinone oxidoreductase subunit 1, chloroplastic</fullName>
        <ecNumber evidence="1">7.1.1.-</ecNumber>
    </recommendedName>
    <alternativeName>
        <fullName evidence="1">NAD(P)H dehydrogenase subunit 1</fullName>
        <shortName evidence="1">NDH subunit 1</shortName>
    </alternativeName>
    <alternativeName>
        <fullName evidence="1">NADH-plastoquinone oxidoreductase subunit 1</fullName>
    </alternativeName>
</protein>
<feature type="chain" id="PRO_0000240023" description="NAD(P)H-quinone oxidoreductase subunit 1, chloroplastic">
    <location>
        <begin position="1"/>
        <end position="363"/>
    </location>
</feature>
<feature type="transmembrane region" description="Helical" evidence="1">
    <location>
        <begin position="30"/>
        <end position="50"/>
    </location>
</feature>
<feature type="transmembrane region" description="Helical" evidence="1">
    <location>
        <begin position="104"/>
        <end position="124"/>
    </location>
</feature>
<feature type="transmembrane region" description="Helical" evidence="1">
    <location>
        <begin position="127"/>
        <end position="147"/>
    </location>
</feature>
<feature type="transmembrane region" description="Helical" evidence="1">
    <location>
        <begin position="248"/>
        <end position="268"/>
    </location>
</feature>
<feature type="transmembrane region" description="Helical" evidence="1">
    <location>
        <begin position="300"/>
        <end position="320"/>
    </location>
</feature>
<feature type="transmembrane region" description="Helical" evidence="1">
    <location>
        <begin position="343"/>
        <end position="363"/>
    </location>
</feature>
<geneLocation type="chloroplast"/>
<comment type="function">
    <text evidence="1">NDH shuttles electrons from NAD(P)H:plastoquinone, via FMN and iron-sulfur (Fe-S) centers, to quinones in the photosynthetic chain and possibly in a chloroplast respiratory chain. The immediate electron acceptor for the enzyme in this species is believed to be plastoquinone. Couples the redox reaction to proton translocation, and thus conserves the redox energy in a proton gradient.</text>
</comment>
<comment type="catalytic activity">
    <reaction evidence="1">
        <text>a plastoquinone + NADH + (n+1) H(+)(in) = a plastoquinol + NAD(+) + n H(+)(out)</text>
        <dbReference type="Rhea" id="RHEA:42608"/>
        <dbReference type="Rhea" id="RHEA-COMP:9561"/>
        <dbReference type="Rhea" id="RHEA-COMP:9562"/>
        <dbReference type="ChEBI" id="CHEBI:15378"/>
        <dbReference type="ChEBI" id="CHEBI:17757"/>
        <dbReference type="ChEBI" id="CHEBI:57540"/>
        <dbReference type="ChEBI" id="CHEBI:57945"/>
        <dbReference type="ChEBI" id="CHEBI:62192"/>
    </reaction>
</comment>
<comment type="catalytic activity">
    <reaction evidence="1">
        <text>a plastoquinone + NADPH + (n+1) H(+)(in) = a plastoquinol + NADP(+) + n H(+)(out)</text>
        <dbReference type="Rhea" id="RHEA:42612"/>
        <dbReference type="Rhea" id="RHEA-COMP:9561"/>
        <dbReference type="Rhea" id="RHEA-COMP:9562"/>
        <dbReference type="ChEBI" id="CHEBI:15378"/>
        <dbReference type="ChEBI" id="CHEBI:17757"/>
        <dbReference type="ChEBI" id="CHEBI:57783"/>
        <dbReference type="ChEBI" id="CHEBI:58349"/>
        <dbReference type="ChEBI" id="CHEBI:62192"/>
    </reaction>
</comment>
<comment type="subunit">
    <text evidence="1">NDH is composed of at least 16 different subunits, 5 of which are encoded in the nucleus.</text>
</comment>
<comment type="subcellular location">
    <subcellularLocation>
        <location evidence="1">Plastid</location>
        <location evidence="1">Chloroplast thylakoid membrane</location>
        <topology evidence="1">Multi-pass membrane protein</topology>
    </subcellularLocation>
</comment>
<comment type="similarity">
    <text evidence="1">Belongs to the complex I subunit 1 family.</text>
</comment>
<proteinExistence type="inferred from homology"/>
<reference key="1">
    <citation type="journal article" date="2006" name="Transgenic Res.">
        <title>Efficient and stable transformation of Lactuca sativa L. cv. Cisco (lettuce) plastids.</title>
        <authorList>
            <person name="Kanamoto H."/>
            <person name="Yamashita A."/>
            <person name="Asao H."/>
            <person name="Okumura S."/>
            <person name="Takase H."/>
            <person name="Hattori M."/>
            <person name="Yokota A."/>
            <person name="Tomizawa K."/>
        </authorList>
    </citation>
    <scope>NUCLEOTIDE SEQUENCE [LARGE SCALE GENOMIC DNA]</scope>
    <source>
        <strain>cv. Cisco</strain>
    </source>
</reference>
<reference key="2">
    <citation type="submission" date="2006-01" db="EMBL/GenBank/DDBJ databases">
        <title>A comparison of the first two published chloroplast genomes in Asteraceae: Lactuca and Helianthus.</title>
        <authorList>
            <person name="Timme R.E."/>
            <person name="Kuehl J.V."/>
            <person name="Boore J.L."/>
            <person name="Jansen R.K."/>
        </authorList>
    </citation>
    <scope>NUCLEOTIDE SEQUENCE [LARGE SCALE GENOMIC DNA]</scope>
    <source>
        <strain>cv. Salinas</strain>
    </source>
</reference>
<organism>
    <name type="scientific">Lactuca sativa</name>
    <name type="common">Garden lettuce</name>
    <dbReference type="NCBI Taxonomy" id="4236"/>
    <lineage>
        <taxon>Eukaryota</taxon>
        <taxon>Viridiplantae</taxon>
        <taxon>Streptophyta</taxon>
        <taxon>Embryophyta</taxon>
        <taxon>Tracheophyta</taxon>
        <taxon>Spermatophyta</taxon>
        <taxon>Magnoliopsida</taxon>
        <taxon>eudicotyledons</taxon>
        <taxon>Gunneridae</taxon>
        <taxon>Pentapetalae</taxon>
        <taxon>asterids</taxon>
        <taxon>campanulids</taxon>
        <taxon>Asterales</taxon>
        <taxon>Asteraceae</taxon>
        <taxon>Cichorioideae</taxon>
        <taxon>Cichorieae</taxon>
        <taxon>Lactucinae</taxon>
        <taxon>Lactuca</taxon>
    </lineage>
</organism>
<keyword id="KW-0150">Chloroplast</keyword>
<keyword id="KW-0472">Membrane</keyword>
<keyword id="KW-0520">NAD</keyword>
<keyword id="KW-0521">NADP</keyword>
<keyword id="KW-0934">Plastid</keyword>
<keyword id="KW-0618">Plastoquinone</keyword>
<keyword id="KW-0874">Quinone</keyword>
<keyword id="KW-0793">Thylakoid</keyword>
<keyword id="KW-1278">Translocase</keyword>
<keyword id="KW-0812">Transmembrane</keyword>
<keyword id="KW-1133">Transmembrane helix</keyword>